<protein>
    <recommendedName>
        <fullName evidence="17">Disks large-associated protein 1</fullName>
        <shortName>DAP-1</shortName>
    </recommendedName>
    <alternativeName>
        <fullName>Guanylate kinase-associated protein</fullName>
        <shortName evidence="14">rGKAP</shortName>
    </alternativeName>
    <alternativeName>
        <fullName>PSD-95/SAP90-binding protein 1</fullName>
    </alternativeName>
    <alternativeName>
        <fullName>SAP90/PSD-95-associated protein 1</fullName>
        <shortName>SAPAP1</shortName>
    </alternativeName>
</protein>
<feature type="chain" id="PRO_0000174290" description="Disks large-associated protein 1">
    <location>
        <begin position="1"/>
        <end position="992"/>
    </location>
</feature>
<feature type="region of interest" description="Disordered" evidence="2">
    <location>
        <begin position="154"/>
        <end position="209"/>
    </location>
</feature>
<feature type="region of interest" description="Disordered" evidence="2">
    <location>
        <begin position="355"/>
        <end position="375"/>
    </location>
</feature>
<feature type="region of interest" description="Interaction with DYL2" evidence="6">
    <location>
        <begin position="665"/>
        <end position="676"/>
    </location>
</feature>
<feature type="region of interest" description="Interaction with DYL2" evidence="6">
    <location>
        <begin position="687"/>
        <end position="698"/>
    </location>
</feature>
<feature type="region of interest" description="Disordered" evidence="2">
    <location>
        <begin position="914"/>
        <end position="980"/>
    </location>
</feature>
<feature type="short sequence motif" description="PDZ-binding">
    <location>
        <begin position="990"/>
        <end position="992"/>
    </location>
</feature>
<feature type="compositionally biased region" description="Low complexity" evidence="2">
    <location>
        <begin position="195"/>
        <end position="209"/>
    </location>
</feature>
<feature type="compositionally biased region" description="Basic and acidic residues" evidence="2">
    <location>
        <begin position="918"/>
        <end position="927"/>
    </location>
</feature>
<feature type="compositionally biased region" description="Basic and acidic residues" evidence="2">
    <location>
        <begin position="943"/>
        <end position="958"/>
    </location>
</feature>
<feature type="compositionally biased region" description="Polar residues" evidence="2">
    <location>
        <begin position="969"/>
        <end position="978"/>
    </location>
</feature>
<feature type="modified residue" description="Phosphoserine" evidence="1">
    <location>
        <position position="169"/>
    </location>
</feature>
<feature type="modified residue" description="Phosphoserine" evidence="19">
    <location>
        <position position="362"/>
    </location>
</feature>
<feature type="modified residue" description="Phosphoserine" evidence="19">
    <location>
        <position position="365"/>
    </location>
</feature>
<feature type="modified residue" description="Phosphoserine" evidence="1">
    <location>
        <position position="368"/>
    </location>
</feature>
<feature type="modified residue" description="Phosphoserine" evidence="1">
    <location>
        <position position="372"/>
    </location>
</feature>
<feature type="modified residue" description="Phosphoserine" evidence="19">
    <location>
        <position position="389"/>
    </location>
</feature>
<feature type="modified residue" description="Phosphoserine" evidence="19">
    <location>
        <position position="418"/>
    </location>
</feature>
<feature type="modified residue" description="Phosphoserine" evidence="19">
    <location>
        <position position="421"/>
    </location>
</feature>
<feature type="modified residue" description="Phosphoserine" evidence="19">
    <location>
        <position position="425"/>
    </location>
</feature>
<feature type="modified residue" description="Phosphoserine" evidence="19">
    <location>
        <position position="428"/>
    </location>
</feature>
<feature type="modified residue" description="Phosphoserine" evidence="19">
    <location>
        <position position="437"/>
    </location>
</feature>
<feature type="modified residue" description="Phosphoserine" evidence="19">
    <location>
        <position position="509"/>
    </location>
</feature>
<feature type="modified residue" description="Phosphoserine" evidence="1">
    <location>
        <position position="516"/>
    </location>
</feature>
<feature type="modified residue" description="Phosphoserine" evidence="1">
    <location>
        <position position="578"/>
    </location>
</feature>
<feature type="modified residue" description="Phosphothreonine" evidence="1">
    <location>
        <position position="579"/>
    </location>
</feature>
<feature type="modified residue" description="Phosphoserine" evidence="1">
    <location>
        <position position="581"/>
    </location>
</feature>
<feature type="modified residue" description="Phosphoserine" evidence="19">
    <location>
        <position position="605"/>
    </location>
</feature>
<feature type="modified residue" description="Phosphothreonine" evidence="1">
    <location>
        <position position="606"/>
    </location>
</feature>
<feature type="modified residue" description="Phosphoserine" evidence="19">
    <location>
        <position position="608"/>
    </location>
</feature>
<feature type="modified residue" description="Phosphoserine" evidence="19">
    <location>
        <position position="611"/>
    </location>
</feature>
<feature type="modified residue" description="Phosphoserine" evidence="19">
    <location>
        <position position="947"/>
    </location>
</feature>
<feature type="splice variant" id="VSP_015415" description="In isoform 2, isoform 3, isoform 4, isoform 5 and isoform 6." evidence="15 16">
    <location>
        <begin position="1"/>
        <end position="298"/>
    </location>
</feature>
<feature type="splice variant" id="VSP_015416" description="In isoform 2, isoform 3 and isoform 4." evidence="15 16">
    <original>QKASVNMDQAVVKSEACQQERSCQYLQ</original>
    <variation>MIDLFKAEWVSSVCVQVSRNGRTDQVW</variation>
    <location>
        <begin position="299"/>
        <end position="325"/>
    </location>
</feature>
<feature type="splice variant" id="VSP_015417" description="In isoform 6." evidence="16">
    <original>QKASVNMDQAVVKSEACQQERSCQYLQ</original>
    <variation>MNLIFHKDILFGVSATK</variation>
    <location>
        <begin position="299"/>
        <end position="325"/>
    </location>
</feature>
<feature type="splice variant" id="VSP_015418" description="In isoform 5." evidence="16">
    <original>QKASVNMDQAVVKSEACQQERSCQYL</original>
    <variation>MIDLFKAEWVSSVCVQVSRNGRTD</variation>
    <location>
        <begin position="299"/>
        <end position="324"/>
    </location>
</feature>
<feature type="splice variant" id="VSP_015419" description="In isoform 4." evidence="15 16">
    <location>
        <begin position="537"/>
        <end position="546"/>
    </location>
</feature>
<feature type="splice variant" id="VSP_015420" description="In isoform 3." evidence="15">
    <location>
        <begin position="547"/>
        <end position="574"/>
    </location>
</feature>
<feature type="mutagenesis site" description="Abolishes interaction with SHANK1." evidence="3">
    <original>T</original>
    <variation>A</variation>
    <location>
        <position position="990"/>
    </location>
</feature>
<feature type="mutagenesis site" description="Abolishes interaction with SHANK1." evidence="3">
    <original>R</original>
    <variation>D</variation>
    <location>
        <position position="991"/>
    </location>
</feature>
<feature type="mutagenesis site" description="Abolishes interaction with SHANK1." evidence="3">
    <original>L</original>
    <variation>A</variation>
    <location>
        <position position="992"/>
    </location>
</feature>
<feature type="sequence conflict" description="In Ref. 1; AAC53054 and 2; BAA24265." evidence="17" ref="1 2">
    <original>S</original>
    <variation>T</variation>
    <location>
        <position position="636"/>
    </location>
</feature>
<feature type="helix" evidence="20">
    <location>
        <begin position="808"/>
        <end position="835"/>
    </location>
</feature>
<feature type="helix" evidence="20">
    <location>
        <begin position="841"/>
        <end position="858"/>
    </location>
</feature>
<feature type="helix" evidence="20">
    <location>
        <begin position="860"/>
        <end position="871"/>
    </location>
</feature>
<feature type="helix" evidence="20">
    <location>
        <begin position="882"/>
        <end position="907"/>
    </location>
</feature>
<feature type="strand" evidence="21">
    <location>
        <begin position="988"/>
        <end position="991"/>
    </location>
</feature>
<comment type="function">
    <text>Part of the postsynaptic scaffold in neuronal cells.</text>
</comment>
<comment type="subunit">
    <text evidence="3 4 5 6 7 9 10 12 13">Interacts with guanylate kinase-like domain of DLG1, DLG2, DLG3, DLG4 and AIP1. Interacts with the PDZ domain of SHANK1, SHANK2 and SHANK3. Found in a complex with DLG4 and SHANK1, SHANK2 or SHANK3. Found in a complex with DLG4 and BEGAIN. Interacts with DYL2 and LRFN1. Interacts with MPP2 (via the SH3-Guanylate kinase-like sub-module) (PubMed:27756895).</text>
</comment>
<comment type="interaction">
    <interactant intactId="EBI-80901">
        <id>P97836</id>
    </interactant>
    <interactant intactId="EBI-375655">
        <id>P31016</id>
        <label>Dlg4</label>
    </interactant>
    <organismsDiffer>false</organismsDiffer>
    <experiments>9</experiments>
</comment>
<comment type="interaction">
    <interactant intactId="EBI-80901">
        <id>P97836</id>
    </interactant>
    <interactant intactId="EBI-696179">
        <id>O88382</id>
        <label>Magi2</label>
    </interactant>
    <organismsDiffer>false</organismsDiffer>
    <experiments>3</experiments>
</comment>
<comment type="interaction">
    <interactant intactId="EBI-80901">
        <id>P97836</id>
    </interactant>
    <interactant intactId="EBI-80909">
        <id>Q9WV48</id>
        <label>Shank1</label>
    </interactant>
    <organismsDiffer>false</organismsDiffer>
    <experiments>7</experiments>
</comment>
<comment type="interaction">
    <interactant intactId="EBI-6269434">
        <id>P97836-5</id>
    </interactant>
    <interactant intactId="EBI-80909">
        <id>Q9WV48</id>
        <label>Shank1</label>
    </interactant>
    <organismsDiffer>false</organismsDiffer>
    <experiments>2</experiments>
</comment>
<comment type="interaction">
    <interactant intactId="EBI-6269434">
        <id>P97836-5</id>
    </interactant>
    <interactant intactId="EBI-80389">
        <id>P78352</id>
        <label>DLG4</label>
    </interactant>
    <organismsDiffer>true</organismsDiffer>
    <experiments>3</experiments>
</comment>
<comment type="subcellular location">
    <subcellularLocation>
        <location>Cell membrane</location>
        <topology>Peripheral membrane protein</topology>
    </subcellularLocation>
    <subcellularLocation>
        <location>Postsynaptic density</location>
    </subcellularLocation>
    <subcellularLocation>
        <location>Synapse</location>
    </subcellularLocation>
</comment>
<comment type="alternative products">
    <event type="alternative splicing"/>
    <isoform>
        <id>P97836-1</id>
        <name>1</name>
        <name>SAPAP1</name>
        <sequence type="displayed"/>
    </isoform>
    <isoform>
        <id>P97836-4</id>
        <name>2</name>
        <name>GKAP C</name>
        <name>2A</name>
        <sequence type="described" ref="VSP_015415 VSP_015416"/>
    </isoform>
    <isoform>
        <id>P97836-5</id>
        <name>3</name>
        <name>GKAP A</name>
        <name>GKAP1a</name>
        <sequence type="described" ref="VSP_015415 VSP_015416 VSP_015420"/>
    </isoform>
    <isoform>
        <id>P97836-6</id>
        <name>4</name>
        <name>GKAP B</name>
        <name>2C</name>
        <sequence type="described" ref="VSP_015415 VSP_015416 VSP_015419"/>
    </isoform>
    <isoform>
        <id>P97836-7</id>
        <name>5</name>
        <name>2B</name>
        <sequence type="described" ref="VSP_015415 VSP_015418"/>
    </isoform>
    <isoform>
        <id>P97836-8</id>
        <name>6</name>
        <name>2D</name>
        <sequence type="described" ref="VSP_015415 VSP_015417"/>
    </isoform>
</comment>
<comment type="tissue specificity">
    <text>Expressed in brain and testis.</text>
</comment>
<comment type="developmental stage">
    <text evidence="11">Highest level of isoform 1 in the brain of newborn rats. Increasing levels of isoforms 2, 3, 4, and 5 in the brain of newborn rats from birth to 6 weeks of postnatal development. Increasing but low level of isoform 6 is expressed in the brain from 2 to 6 weeks of postnatal development.</text>
</comment>
<comment type="PTM">
    <text evidence="8">Ubiquitinated by TRIM3; leading to proteasomal degradation.</text>
</comment>
<comment type="similarity">
    <text evidence="17">Belongs to the SAPAP family.</text>
</comment>
<dbReference type="EMBL" id="U67987">
    <property type="protein sequence ID" value="AAC53054.1"/>
    <property type="molecule type" value="mRNA"/>
</dbReference>
<dbReference type="EMBL" id="AB003594">
    <property type="protein sequence ID" value="BAA24265.1"/>
    <property type="molecule type" value="mRNA"/>
</dbReference>
<dbReference type="EMBL" id="U67137">
    <property type="protein sequence ID" value="AAB48587.1"/>
    <property type="molecule type" value="mRNA"/>
</dbReference>
<dbReference type="PIR" id="T00025">
    <property type="entry name" value="T00025"/>
</dbReference>
<dbReference type="RefSeq" id="NP_001291216.1">
    <molecule id="P97836-7"/>
    <property type="nucleotide sequence ID" value="NM_001304287.1"/>
</dbReference>
<dbReference type="RefSeq" id="XP_008765652.1">
    <molecule id="P97836-4"/>
    <property type="nucleotide sequence ID" value="XM_008767430.4"/>
</dbReference>
<dbReference type="RefSeq" id="XP_008765654.1">
    <molecule id="P97836-8"/>
    <property type="nucleotide sequence ID" value="XM_008767432.4"/>
</dbReference>
<dbReference type="RefSeq" id="XP_038940121.1">
    <molecule id="P97836-5"/>
    <property type="nucleotide sequence ID" value="XM_039084193.2"/>
</dbReference>
<dbReference type="RefSeq" id="XP_063123769.1">
    <molecule id="P97836-6"/>
    <property type="nucleotide sequence ID" value="XM_063267699.1"/>
</dbReference>
<dbReference type="PDB" id="4R0Y">
    <property type="method" value="X-ray"/>
    <property type="resolution" value="2.00 A"/>
    <property type="chains" value="A/B=807-916, A/B=946-971"/>
</dbReference>
<dbReference type="PDB" id="5OVC">
    <property type="method" value="X-ray"/>
    <property type="resolution" value="1.55 A"/>
    <property type="chains" value="B=987-992"/>
</dbReference>
<dbReference type="PDBsum" id="4R0Y"/>
<dbReference type="PDBsum" id="5OVC"/>
<dbReference type="SMR" id="P97836"/>
<dbReference type="BioGRID" id="249233">
    <property type="interactions" value="9"/>
</dbReference>
<dbReference type="CORUM" id="P97836"/>
<dbReference type="ELM" id="P97836"/>
<dbReference type="FunCoup" id="P97836">
    <property type="interactions" value="2079"/>
</dbReference>
<dbReference type="IntAct" id="P97836">
    <property type="interactions" value="17"/>
</dbReference>
<dbReference type="MINT" id="P97836"/>
<dbReference type="STRING" id="10116.ENSRNOP00000073938"/>
<dbReference type="iPTMnet" id="P97836"/>
<dbReference type="PhosphoSitePlus" id="P97836"/>
<dbReference type="PaxDb" id="10116-ENSRNOP00000022351"/>
<dbReference type="ABCD" id="P97836">
    <property type="antibodies" value="3 sequenced antibodies"/>
</dbReference>
<dbReference type="Ensembl" id="ENSRNOT00000087592.2">
    <molecule id="P97836-7"/>
    <property type="protein sequence ID" value="ENSRNOP00000072852.1"/>
    <property type="gene ID" value="ENSRNOG00000016196.8"/>
</dbReference>
<dbReference type="GeneID" id="65040"/>
<dbReference type="KEGG" id="rno:65040"/>
<dbReference type="UCSC" id="RGD:620223">
    <molecule id="P97836-1"/>
    <property type="organism name" value="rat"/>
</dbReference>
<dbReference type="AGR" id="RGD:620223"/>
<dbReference type="CTD" id="9229"/>
<dbReference type="RGD" id="620223">
    <property type="gene designation" value="Dlgap1"/>
</dbReference>
<dbReference type="VEuPathDB" id="HostDB:ENSRNOG00000016196"/>
<dbReference type="eggNOG" id="KOG3971">
    <property type="taxonomic scope" value="Eukaryota"/>
</dbReference>
<dbReference type="GeneTree" id="ENSGT00940000156220"/>
<dbReference type="InParanoid" id="P97836"/>
<dbReference type="OrthoDB" id="10036956at2759"/>
<dbReference type="PhylomeDB" id="P97836"/>
<dbReference type="Reactome" id="R-RNO-6794361">
    <property type="pathway name" value="Neurexins and neuroligins"/>
</dbReference>
<dbReference type="CD-CODE" id="A7E9CBB4">
    <property type="entry name" value="Postsynaptic density"/>
</dbReference>
<dbReference type="EvolutionaryTrace" id="P97836"/>
<dbReference type="PRO" id="PR:P97836"/>
<dbReference type="Proteomes" id="UP000002494">
    <property type="component" value="Chromosome 9"/>
</dbReference>
<dbReference type="Bgee" id="ENSRNOG00000016196">
    <property type="expression patterns" value="Expressed in frontal cortex and 14 other cell types or tissues"/>
</dbReference>
<dbReference type="ExpressionAtlas" id="P97836">
    <property type="expression patterns" value="baseline and differential"/>
</dbReference>
<dbReference type="GO" id="GO:0098978">
    <property type="term" value="C:glutamatergic synapse"/>
    <property type="evidence" value="ECO:0000314"/>
    <property type="project" value="SynGO"/>
</dbReference>
<dbReference type="GO" id="GO:0005886">
    <property type="term" value="C:plasma membrane"/>
    <property type="evidence" value="ECO:0000304"/>
    <property type="project" value="Reactome"/>
</dbReference>
<dbReference type="GO" id="GO:0014069">
    <property type="term" value="C:postsynaptic density"/>
    <property type="evidence" value="ECO:0000266"/>
    <property type="project" value="RGD"/>
</dbReference>
<dbReference type="GO" id="GO:0099092">
    <property type="term" value="C:postsynaptic density, intracellular component"/>
    <property type="evidence" value="ECO:0000314"/>
    <property type="project" value="SynGO"/>
</dbReference>
<dbReference type="GO" id="GO:0045211">
    <property type="term" value="C:postsynaptic membrane"/>
    <property type="evidence" value="ECO:0000314"/>
    <property type="project" value="RGD"/>
</dbReference>
<dbReference type="GO" id="GO:0099572">
    <property type="term" value="C:postsynaptic specialization"/>
    <property type="evidence" value="ECO:0000318"/>
    <property type="project" value="GO_Central"/>
</dbReference>
<dbReference type="GO" id="GO:0045202">
    <property type="term" value="C:synapse"/>
    <property type="evidence" value="ECO:0000314"/>
    <property type="project" value="BHF-UCL"/>
</dbReference>
<dbReference type="GO" id="GO:0060090">
    <property type="term" value="F:molecular adaptor activity"/>
    <property type="evidence" value="ECO:0000318"/>
    <property type="project" value="GO_Central"/>
</dbReference>
<dbReference type="GO" id="GO:0019904">
    <property type="term" value="F:protein domain specific binding"/>
    <property type="evidence" value="ECO:0000314"/>
    <property type="project" value="RGD"/>
</dbReference>
<dbReference type="GO" id="GO:0044877">
    <property type="term" value="F:protein-containing complex binding"/>
    <property type="evidence" value="ECO:0000314"/>
    <property type="project" value="UniProtKB"/>
</dbReference>
<dbReference type="GO" id="GO:0098919">
    <property type="term" value="F:structural constituent of postsynaptic density"/>
    <property type="evidence" value="ECO:0000314"/>
    <property type="project" value="SynGO"/>
</dbReference>
<dbReference type="GO" id="GO:0070842">
    <property type="term" value="P:aggresome assembly"/>
    <property type="evidence" value="ECO:0000315"/>
    <property type="project" value="BHF-UCL"/>
</dbReference>
<dbReference type="GO" id="GO:0050804">
    <property type="term" value="P:modulation of chemical synaptic transmission"/>
    <property type="evidence" value="ECO:0000314"/>
    <property type="project" value="SynGO"/>
</dbReference>
<dbReference type="GO" id="GO:0035418">
    <property type="term" value="P:protein localization to synapse"/>
    <property type="evidence" value="ECO:0000315"/>
    <property type="project" value="BHF-UCL"/>
</dbReference>
<dbReference type="GO" id="GO:0061136">
    <property type="term" value="P:regulation of proteasomal protein catabolic process"/>
    <property type="evidence" value="ECO:0000315"/>
    <property type="project" value="BHF-UCL"/>
</dbReference>
<dbReference type="GO" id="GO:0023052">
    <property type="term" value="P:signaling"/>
    <property type="evidence" value="ECO:0007669"/>
    <property type="project" value="InterPro"/>
</dbReference>
<dbReference type="InterPro" id="IPR005026">
    <property type="entry name" value="SAPAP"/>
</dbReference>
<dbReference type="PANTHER" id="PTHR12353:SF7">
    <property type="entry name" value="DISKS LARGE-ASSOCIATED PROTEIN 1"/>
    <property type="match status" value="1"/>
</dbReference>
<dbReference type="PANTHER" id="PTHR12353">
    <property type="entry name" value="DISKS LARGE-ASSOCIATED PROTEIN DAP SAP90/PSD-95-ASSOCIATED PROTEIN"/>
    <property type="match status" value="1"/>
</dbReference>
<dbReference type="Pfam" id="PF03359">
    <property type="entry name" value="GKAP"/>
    <property type="match status" value="1"/>
</dbReference>
<proteinExistence type="evidence at protein level"/>
<sequence>MKGLSGSRSHHHGITCESACDSLSHHSDHKPYLLSPVDHHPADHPYYTQRNSFQAECVGPFSDPLASSTFPRRHYTSQQELKDESALVPRTLATKANRLPTNLLDQFERQLPLSRDGYHTLQYKRTAVEHRSDSPGRIRHLVHSVQKLFTKSHSLEGASKGGVNGGKASPDGSQTVRYGKRSKSKERRSEPKARSNASNASPTSPSWWSSDDNLDGDMCLYHTPSGVMTMGRCPDRSVSQYFMGAYNTISEQAVKASRSNNDVKCSTCANLPVTLDAPLLKKSAWSSTLTVSRAREVYQKASVNMDQAVVKSEACQQERSCQYLQVPQDEWTGYTPRGKDDEIPCRRMRSGSYIKAMGDEDSGDSDTSPKPSPKVAARRESYLKATQPSLTELTTLKISNEHSPKLQIRSHSYLRAVSEVSINRSLDSLDPAGLLTSPKFRSRNESYMRAMSTISQVSEMEVNGQFESVCESVFSELESQAVEALDLPMPGCFRMRSHSYVRAIEKGCSQDDECVSLRSSSPPRTTTTVRTIQSSTGVIKLSSAVEVSSCITTYKKTPPPVPPRTTTKPFISITAQSSTESAQDAYMDGQGQRGDMISQSGLSNSTESLDSMKALTAAIEAANAQIHGPASQHMGSNAAAVTTTTTIATVTTEDRKKDFKKNRCLSIGIQVDDAEESEKMAESKTSSKFQSVGVQVEEEKCFRRFTRSNSVTTAVQADLDFHDNLENSLESIEDNSCPGPMARQFSRDASTSTVSIQGSGNHYHACAADDDFDTDFDPSILPPPDPWIDSITEDPLEAVQRSVCHRDGHWFLKLLQAERDRMEGWCKQMEREERENNLPEDILGKIRTAVGSAQLLMAQKFYQFRELCEENLNPNAHPRPTSQDLAGFWDMLQLSIENISMKFDELHQLKANNWKQMDPLDKKERRAPPPVPKKPAKGPAPLIRERSLESSQRQEARKRLMAAKRAASVRQNSATESAESIEIYIPEAQTRL</sequence>
<name>DLGP1_RAT</name>
<keyword id="KW-0002">3D-structure</keyword>
<keyword id="KW-0025">Alternative splicing</keyword>
<keyword id="KW-1003">Cell membrane</keyword>
<keyword id="KW-0472">Membrane</keyword>
<keyword id="KW-0597">Phosphoprotein</keyword>
<keyword id="KW-1185">Reference proteome</keyword>
<keyword id="KW-0770">Synapse</keyword>
<keyword id="KW-0832">Ubl conjugation</keyword>
<reference key="1">
    <citation type="journal article" date="1997" name="J. Cell Biol.">
        <title>GKAP, a novel synaptic protein that interacts with the guanylate kinase-like domain of the PSD-95/SAP90 family of channel clustering molecules.</title>
        <authorList>
            <person name="Kim E."/>
            <person name="Naisbitt S."/>
            <person name="Hsueh Y.-P."/>
            <person name="Rao A."/>
            <person name="Rothschild A."/>
            <person name="Craig A.M."/>
            <person name="Sheng M."/>
        </authorList>
    </citation>
    <scope>NUCLEOTIDE SEQUENCE [MRNA] (ISOFORMS 2; 3 AND 4)</scope>
    <scope>INTERACTION WITH DLG1; DLG2; DLG3 AND DLG4</scope>
    <source>
        <tissue>Brain</tissue>
    </source>
</reference>
<reference key="2">
    <citation type="journal article" date="1997" name="FEBS Lett.">
        <title>Differential expression of isoforms of PSD-95 binding protein (GKAP/SAPAP1) during rat brain development.</title>
        <authorList>
            <person name="Kawashima N."/>
            <person name="Takamiya K."/>
            <person name="Sun J."/>
            <person name="Kitabatake A."/>
            <person name="Sobue K."/>
        </authorList>
    </citation>
    <scope>NUCLEOTIDE SEQUENCE [MRNA] (ISOFORMS 2; 4; 5 AND 6)</scope>
    <scope>DEVELOPMENTAL STAGE</scope>
</reference>
<reference key="3">
    <citation type="journal article" date="1997" name="J. Biol. Chem.">
        <title>SAPAPs. A family of PSD-95/SAP90-associated proteins localized at postsynaptic density.</title>
        <authorList>
            <person name="Takeuchi M."/>
            <person name="Hata Y."/>
            <person name="Hirao K."/>
            <person name="Toyoda A."/>
            <person name="Irie M."/>
            <person name="Takai Y."/>
        </authorList>
    </citation>
    <scope>NUCLEOTIDE SEQUENCE [MRNA] (ISOFORM 1)</scope>
    <source>
        <tissue>Brain</tissue>
    </source>
</reference>
<reference key="4">
    <citation type="journal article" date="1998" name="J. Biol. Chem.">
        <title>BEGAIN (brain-enriched guanylate kinase-associated protein), a novel neuronal PSD-95/SAP90-binding protein.</title>
        <authorList>
            <person name="Deguchi M."/>
            <person name="Hata Y."/>
            <person name="Takeuchi M."/>
            <person name="Ide N."/>
            <person name="Hirao K."/>
            <person name="Yao I."/>
            <person name="Irie M."/>
            <person name="Toyoda A."/>
            <person name="Takai Y."/>
        </authorList>
    </citation>
    <scope>INTERACTION WITH BEGAIN AND DLG4</scope>
</reference>
<reference key="5">
    <citation type="journal article" date="1999" name="Biochem. Biophys. Res. Commun.">
        <title>Proline-rich synapse-associated proteins ProSAP1 and ProSAP2 interact with synaptic proteins of the SAPAP/GKAP family.</title>
        <authorList>
            <person name="Boeckers T.M."/>
            <person name="Winter C."/>
            <person name="Smalla K.-H."/>
            <person name="Kreutz M.R."/>
            <person name="Bockmann J."/>
            <person name="Seidenbecher C."/>
            <person name="Garner C.C."/>
            <person name="Gundelfinger E.D."/>
        </authorList>
    </citation>
    <scope>INTERACTION WITH DLG4 AND SHANK PROTEINS</scope>
</reference>
<reference key="6">
    <citation type="journal article" date="1999" name="J. Biol. Chem.">
        <title>Synamon, a novel neuronal protein interacting with synapse-associated protein 90/postsynaptic density-95-associated protein.</title>
        <authorList>
            <person name="Yao I."/>
            <person name="Hata Y."/>
            <person name="Hirao K."/>
            <person name="Deguchi M."/>
            <person name="Ide N."/>
            <person name="Takeuchi M."/>
            <person name="Takai Y."/>
        </authorList>
    </citation>
    <scope>INTERACTION WITH DLG4 AND SHANK1</scope>
    <source>
        <tissue>Brain</tissue>
    </source>
</reference>
<reference key="7">
    <citation type="journal article" date="1999" name="Neuron">
        <title>Shank, a novel family of postsynaptic density proteins that binds to the NMDA receptor/PSD-95/GKAP complex and cortactin.</title>
        <authorList>
            <person name="Naisbitt S."/>
            <person name="Kim E."/>
            <person name="Tu J.C."/>
            <person name="Xiao B."/>
            <person name="Sala C."/>
            <person name="Valtschanoff J."/>
            <person name="Weinberg R.J."/>
            <person name="Worley P.F."/>
            <person name="Sheng M."/>
        </authorList>
    </citation>
    <scope>INTERACTION WITH SHANK PROTEINS</scope>
    <scope>MUTAGENESIS OF THR-990; ARG-991 AND LEU-992</scope>
</reference>
<reference key="8">
    <citation type="journal article" date="1998" name="J. Biol. Chem.">
        <title>A novel multiple PDZ domain-containing molecule interacting with N-methyl-d-aspartate receptors and neuronal cell adhesion proteins.</title>
        <authorList>
            <person name="Hirao K."/>
            <person name="Hata Y."/>
            <person name="Ide N."/>
            <person name="Takeuchi M."/>
            <person name="Irie M."/>
            <person name="Yao I."/>
            <person name="Deguchi M."/>
            <person name="Toyoda A."/>
            <person name="Suedhof T.C."/>
            <person name="Takai Y."/>
        </authorList>
    </citation>
    <scope>INTERACTION WITH AIP1</scope>
</reference>
<reference key="9">
    <citation type="journal article" date="2004" name="Proteomics">
        <title>Proteomic identification of brain proteins that interact with dynein light chain LC8.</title>
        <authorList>
            <person name="Navarro-Lerida I."/>
            <person name="Martinez Moreno M."/>
            <person name="Roncal F."/>
            <person name="Gavilanes F."/>
            <person name="Albar J.P."/>
            <person name="Rodriguez-Crespo I."/>
        </authorList>
    </citation>
    <scope>INTERACTION WITH DYL2</scope>
</reference>
<reference key="10">
    <citation type="journal article" date="2006" name="Neuron">
        <title>SALM synaptic cell adhesion-like molecules regulate the differentiation of excitatory synapses.</title>
        <authorList>
            <person name="Ko J."/>
            <person name="Kim S."/>
            <person name="Chung H.S."/>
            <person name="Kim K."/>
            <person name="Han K."/>
            <person name="Kim H."/>
            <person name="Jun H."/>
            <person name="Kaang B.-K."/>
            <person name="Kim E."/>
        </authorList>
    </citation>
    <scope>INTERACTION WITH LRFN1</scope>
</reference>
<reference key="11">
    <citation type="journal article" date="2012" name="Nat. Commun.">
        <title>Quantitative maps of protein phosphorylation sites across 14 different rat organs and tissues.</title>
        <authorList>
            <person name="Lundby A."/>
            <person name="Secher A."/>
            <person name="Lage K."/>
            <person name="Nordsborg N.B."/>
            <person name="Dmytriyev A."/>
            <person name="Lundby C."/>
            <person name="Olsen J.V."/>
        </authorList>
    </citation>
    <scope>PHOSPHORYLATION [LARGE SCALE ANALYSIS] AT SER-362; SER-365; SER-389; SER-418; SER-421; SER-425; SER-428; SER-437; SER-509; SER-605; SER-608; SER-611 AND SER-947</scope>
    <scope>IDENTIFICATION BY MASS SPECTROMETRY [LARGE SCALE ANALYSIS]</scope>
</reference>
<reference key="12">
    <citation type="journal article" date="2016" name="Sci. Rep.">
        <title>MPP2 is a postsynaptic MAGUK scaffold protein that links SynCAM1 cell adhesion molecules to core components of the postsynaptic density.</title>
        <authorList>
            <person name="Rademacher N."/>
            <person name="Schmerl B."/>
            <person name="Lardong J.A."/>
            <person name="Wahl M.C."/>
            <person name="Shoichet S.A."/>
        </authorList>
    </citation>
    <scope>INTERACTION WITH MPP2</scope>
</reference>
<reference key="13">
    <citation type="journal article" date="2010" name="PLoS ONE">
        <title>Degradation of postsynaptic scaffold GKAP and regulation of dendritic spine morphology by the TRIM3 ubiquitin ligase in rat hippocampal neurons.</title>
        <authorList>
            <person name="Hung A.Y."/>
            <person name="Sung C.C."/>
            <person name="Brito I.L."/>
            <person name="Sheng M."/>
        </authorList>
    </citation>
    <scope>UBIQUITINATION BY TRIM3</scope>
</reference>
<gene>
    <name evidence="18" type="primary">Dlgap1</name>
    <name evidence="14" type="synonym">Gkap</name>
</gene>
<organism>
    <name type="scientific">Rattus norvegicus</name>
    <name type="common">Rat</name>
    <dbReference type="NCBI Taxonomy" id="10116"/>
    <lineage>
        <taxon>Eukaryota</taxon>
        <taxon>Metazoa</taxon>
        <taxon>Chordata</taxon>
        <taxon>Craniata</taxon>
        <taxon>Vertebrata</taxon>
        <taxon>Euteleostomi</taxon>
        <taxon>Mammalia</taxon>
        <taxon>Eutheria</taxon>
        <taxon>Euarchontoglires</taxon>
        <taxon>Glires</taxon>
        <taxon>Rodentia</taxon>
        <taxon>Myomorpha</taxon>
        <taxon>Muroidea</taxon>
        <taxon>Muridae</taxon>
        <taxon>Murinae</taxon>
        <taxon>Rattus</taxon>
    </lineage>
</organism>
<evidence type="ECO:0000250" key="1">
    <source>
        <dbReference type="UniProtKB" id="Q9D415"/>
    </source>
</evidence>
<evidence type="ECO:0000256" key="2">
    <source>
        <dbReference type="SAM" id="MobiDB-lite"/>
    </source>
</evidence>
<evidence type="ECO:0000269" key="3">
    <source>
    </source>
</evidence>
<evidence type="ECO:0000269" key="4">
    <source>
    </source>
</evidence>
<evidence type="ECO:0000269" key="5">
    <source>
    </source>
</evidence>
<evidence type="ECO:0000269" key="6">
    <source>
    </source>
</evidence>
<evidence type="ECO:0000269" key="7">
    <source>
    </source>
</evidence>
<evidence type="ECO:0000269" key="8">
    <source>
    </source>
</evidence>
<evidence type="ECO:0000269" key="9">
    <source>
    </source>
</evidence>
<evidence type="ECO:0000269" key="10">
    <source>
    </source>
</evidence>
<evidence type="ECO:0000269" key="11">
    <source>
    </source>
</evidence>
<evidence type="ECO:0000269" key="12">
    <source>
    </source>
</evidence>
<evidence type="ECO:0000269" key="13">
    <source>
    </source>
</evidence>
<evidence type="ECO:0000303" key="14">
    <source>
    </source>
</evidence>
<evidence type="ECO:0000303" key="15">
    <source>
    </source>
</evidence>
<evidence type="ECO:0000303" key="16">
    <source>
    </source>
</evidence>
<evidence type="ECO:0000305" key="17"/>
<evidence type="ECO:0000312" key="18">
    <source>
        <dbReference type="RGD" id="620223"/>
    </source>
</evidence>
<evidence type="ECO:0007744" key="19">
    <source>
    </source>
</evidence>
<evidence type="ECO:0007829" key="20">
    <source>
        <dbReference type="PDB" id="4R0Y"/>
    </source>
</evidence>
<evidence type="ECO:0007829" key="21">
    <source>
        <dbReference type="PDB" id="5OVC"/>
    </source>
</evidence>
<accession>P97836</accession>
<accession>O54773</accession>
<accession>P97841</accession>